<reference key="1">
    <citation type="journal article" date="1997" name="Science">
        <title>The complete genome sequence of Escherichia coli K-12.</title>
        <authorList>
            <person name="Blattner F.R."/>
            <person name="Plunkett G. III"/>
            <person name="Bloch C.A."/>
            <person name="Perna N.T."/>
            <person name="Burland V."/>
            <person name="Riley M."/>
            <person name="Collado-Vides J."/>
            <person name="Glasner J.D."/>
            <person name="Rode C.K."/>
            <person name="Mayhew G.F."/>
            <person name="Gregor J."/>
            <person name="Davis N.W."/>
            <person name="Kirkpatrick H.A."/>
            <person name="Goeden M.A."/>
            <person name="Rose D.J."/>
            <person name="Mau B."/>
            <person name="Shao Y."/>
        </authorList>
    </citation>
    <scope>NUCLEOTIDE SEQUENCE [LARGE SCALE GENOMIC DNA]</scope>
    <source>
        <strain>K12 / MG1655 / ATCC 47076</strain>
    </source>
</reference>
<reference key="2">
    <citation type="journal article" date="2006" name="Mol. Syst. Biol.">
        <title>Highly accurate genome sequences of Escherichia coli K-12 strains MG1655 and W3110.</title>
        <authorList>
            <person name="Hayashi K."/>
            <person name="Morooka N."/>
            <person name="Yamamoto Y."/>
            <person name="Fujita K."/>
            <person name="Isono K."/>
            <person name="Choi S."/>
            <person name="Ohtsubo E."/>
            <person name="Baba T."/>
            <person name="Wanner B.L."/>
            <person name="Mori H."/>
            <person name="Horiuchi T."/>
        </authorList>
    </citation>
    <scope>NUCLEOTIDE SEQUENCE [LARGE SCALE GENOMIC DNA]</scope>
    <source>
        <strain>K12 / W3110 / ATCC 27325 / DSM 5911</strain>
    </source>
</reference>
<organism>
    <name type="scientific">Escherichia coli (strain K12)</name>
    <dbReference type="NCBI Taxonomy" id="83333"/>
    <lineage>
        <taxon>Bacteria</taxon>
        <taxon>Pseudomonadati</taxon>
        <taxon>Pseudomonadota</taxon>
        <taxon>Gammaproteobacteria</taxon>
        <taxon>Enterobacterales</taxon>
        <taxon>Enterobacteriaceae</taxon>
        <taxon>Escherichia</taxon>
    </lineage>
</organism>
<dbReference type="EMBL" id="U00096">
    <property type="protein sequence ID" value="AAC75141.2"/>
    <property type="molecule type" value="Genomic_DNA"/>
</dbReference>
<dbReference type="EMBL" id="AP009048">
    <property type="protein sequence ID" value="BAE76581.1"/>
    <property type="molecule type" value="Genomic_DNA"/>
</dbReference>
<dbReference type="PIR" id="G64974">
    <property type="entry name" value="G64974"/>
</dbReference>
<dbReference type="RefSeq" id="NP_416584.4">
    <property type="nucleotide sequence ID" value="NC_000913.3"/>
</dbReference>
<dbReference type="RefSeq" id="WP_001350529.1">
    <property type="nucleotide sequence ID" value="NZ_LN832404.1"/>
</dbReference>
<dbReference type="PDB" id="2K8E">
    <property type="method" value="NMR"/>
    <property type="chains" value="A=1-110"/>
</dbReference>
<dbReference type="PDBsum" id="2K8E"/>
<dbReference type="BMRB" id="P76402"/>
<dbReference type="SMR" id="P76402"/>
<dbReference type="BioGRID" id="4260428">
    <property type="interactions" value="182"/>
</dbReference>
<dbReference type="FunCoup" id="P76402">
    <property type="interactions" value="3"/>
</dbReference>
<dbReference type="STRING" id="511145.b2080"/>
<dbReference type="jPOST" id="P76402"/>
<dbReference type="PaxDb" id="511145-b2080"/>
<dbReference type="DNASU" id="947095"/>
<dbReference type="EnsemblBacteria" id="AAC75141">
    <property type="protein sequence ID" value="AAC75141"/>
    <property type="gene ID" value="b2080"/>
</dbReference>
<dbReference type="GeneID" id="947095"/>
<dbReference type="KEGG" id="ecj:JW5339"/>
<dbReference type="KEGG" id="eco:b2080"/>
<dbReference type="KEGG" id="ecoc:C3026_11695"/>
<dbReference type="PATRIC" id="fig|511145.12.peg.2158"/>
<dbReference type="EchoBASE" id="EB3812"/>
<dbReference type="eggNOG" id="COG3422">
    <property type="taxonomic scope" value="Bacteria"/>
</dbReference>
<dbReference type="HOGENOM" id="CLU_163886_0_0_6"/>
<dbReference type="InParanoid" id="P76402"/>
<dbReference type="OMA" id="AANHQVI"/>
<dbReference type="OrthoDB" id="9802792at2"/>
<dbReference type="PhylomeDB" id="P76402"/>
<dbReference type="BioCyc" id="EcoCyc:G7117-MONOMER"/>
<dbReference type="EvolutionaryTrace" id="P76402"/>
<dbReference type="PRO" id="PR:P76402"/>
<dbReference type="Proteomes" id="UP000000625">
    <property type="component" value="Chromosome"/>
</dbReference>
<dbReference type="GO" id="GO:0006302">
    <property type="term" value="P:double-strand break repair"/>
    <property type="evidence" value="ECO:0000316"/>
    <property type="project" value="EcoCyc"/>
</dbReference>
<dbReference type="FunFam" id="2.30.29.80:FF:000001">
    <property type="entry name" value="DUF1508 domain-containing protein"/>
    <property type="match status" value="1"/>
</dbReference>
<dbReference type="Gene3D" id="2.30.29.80">
    <property type="match status" value="1"/>
</dbReference>
<dbReference type="InterPro" id="IPR010879">
    <property type="entry name" value="DUF1508"/>
</dbReference>
<dbReference type="InterPro" id="IPR051141">
    <property type="entry name" value="UPF0339_domain"/>
</dbReference>
<dbReference type="InterPro" id="IPR036913">
    <property type="entry name" value="YegP-like_sf"/>
</dbReference>
<dbReference type="PANTHER" id="PTHR40606">
    <property type="match status" value="1"/>
</dbReference>
<dbReference type="PANTHER" id="PTHR40606:SF1">
    <property type="entry name" value="UPF0339 PROTEIN YEGP"/>
    <property type="match status" value="1"/>
</dbReference>
<dbReference type="Pfam" id="PF07411">
    <property type="entry name" value="DUF1508"/>
    <property type="match status" value="2"/>
</dbReference>
<dbReference type="SUPFAM" id="SSF160113">
    <property type="entry name" value="YegP-like"/>
    <property type="match status" value="2"/>
</dbReference>
<feature type="chain" id="PRO_0000218135" description="UPF0339 protein YegP">
    <location>
        <begin position="1"/>
        <end position="110"/>
    </location>
</feature>
<feature type="repeat" description="1">
    <location>
        <begin position="10"/>
        <end position="58"/>
    </location>
</feature>
<feature type="repeat" description="2">
    <location>
        <begin position="61"/>
        <end position="109"/>
    </location>
</feature>
<feature type="strand" evidence="2">
    <location>
        <begin position="4"/>
        <end position="9"/>
    </location>
</feature>
<feature type="strand" evidence="2">
    <location>
        <begin position="15"/>
        <end position="20"/>
    </location>
</feature>
<feature type="strand" evidence="2">
    <location>
        <begin position="26"/>
        <end position="29"/>
    </location>
</feature>
<feature type="strand" evidence="2">
    <location>
        <begin position="33"/>
        <end position="35"/>
    </location>
</feature>
<feature type="helix" evidence="2">
    <location>
        <begin position="36"/>
        <end position="48"/>
    </location>
</feature>
<feature type="strand" evidence="2">
    <location>
        <begin position="49"/>
        <end position="51"/>
    </location>
</feature>
<feature type="turn" evidence="2">
    <location>
        <begin position="53"/>
        <end position="55"/>
    </location>
</feature>
<feature type="strand" evidence="2">
    <location>
        <begin position="56"/>
        <end position="61"/>
    </location>
</feature>
<feature type="turn" evidence="2">
    <location>
        <begin position="62"/>
        <end position="64"/>
    </location>
</feature>
<feature type="strand" evidence="2">
    <location>
        <begin position="65"/>
        <end position="71"/>
    </location>
</feature>
<feature type="strand" evidence="2">
    <location>
        <begin position="77"/>
        <end position="80"/>
    </location>
</feature>
<feature type="strand" evidence="2">
    <location>
        <begin position="84"/>
        <end position="86"/>
    </location>
</feature>
<feature type="helix" evidence="2">
    <location>
        <begin position="87"/>
        <end position="100"/>
    </location>
</feature>
<feature type="strand" evidence="2">
    <location>
        <begin position="106"/>
        <end position="108"/>
    </location>
</feature>
<gene>
    <name type="primary">yegP</name>
    <name type="ordered locus">b2080</name>
    <name type="ordered locus">JW5339</name>
</gene>
<accession>P76402</accession>
<accession>Q2MAX5</accession>
<keyword id="KW-0002">3D-structure</keyword>
<keyword id="KW-1185">Reference proteome</keyword>
<keyword id="KW-0677">Repeat</keyword>
<protein>
    <recommendedName>
        <fullName>UPF0339 protein YegP</fullName>
    </recommendedName>
</protein>
<evidence type="ECO:0000305" key="1"/>
<evidence type="ECO:0007829" key="2">
    <source>
        <dbReference type="PDB" id="2K8E"/>
    </source>
</evidence>
<proteinExistence type="evidence at protein level"/>
<comment type="similarity">
    <text evidence="1">Belongs to the UPF0339 family. Duplicated subfamily.</text>
</comment>
<name>YEGP_ECOLI</name>
<sequence length="110" mass="12024">MAGWFELSKSSDNQFRFVLKAGNGETILTSELYTSKTSAEKGIASVRSNSPQEERYEKKTASNGKFYFNLKAANHQIIGSSQMYATAQSRETGIASVKANGTSQTVKDNT</sequence>